<sequence length="342" mass="37387">MNKETLILAIETSCDETSVSVIKNGNSILSNIVLSQIESHKRFGGVVPEVASRHHVEGITTTIEEALTTANISMNDIDAIAVTQGPGLIGALLIGINAAKALAFAYDKPLIPVHHIAGHIYANHLEEPLTFPLITLIVSGGHTELVYMKSHMHFEVIGETRDDAVGEAYDKVARTIDLPYPGGPQIDKLAQYGKDTYDFPRVWLEKESYDFSFSGLKSSVINKLHNLRQKNEEVVKEDVATSFQNSVVDVLSTKAINACKAYKVNRLIVAGGVASNKGLRYRLQQLCEDNNIHLSIPSPKLCTDNAAMIGAAAYYYYQSGITAKLDLNGENNMDIEEATIEV</sequence>
<evidence type="ECO:0000255" key="1">
    <source>
        <dbReference type="HAMAP-Rule" id="MF_01445"/>
    </source>
</evidence>
<reference key="1">
    <citation type="journal article" date="2005" name="J. Bacteriol.">
        <title>Whole-genome sequencing of Staphylococcus haemolyticus uncovers the extreme plasticity of its genome and the evolution of human-colonizing staphylococcal species.</title>
        <authorList>
            <person name="Takeuchi F."/>
            <person name="Watanabe S."/>
            <person name="Baba T."/>
            <person name="Yuzawa H."/>
            <person name="Ito T."/>
            <person name="Morimoto Y."/>
            <person name="Kuroda M."/>
            <person name="Cui L."/>
            <person name="Takahashi M."/>
            <person name="Ankai A."/>
            <person name="Baba S."/>
            <person name="Fukui S."/>
            <person name="Lee J.C."/>
            <person name="Hiramatsu K."/>
        </authorList>
    </citation>
    <scope>NUCLEOTIDE SEQUENCE [LARGE SCALE GENOMIC DNA]</scope>
    <source>
        <strain>JCSC1435</strain>
    </source>
</reference>
<comment type="function">
    <text evidence="1">Required for the formation of a threonylcarbamoyl group on adenosine at position 37 (t(6)A37) in tRNAs that read codons beginning with adenine. Is involved in the transfer of the threonylcarbamoyl moiety of threonylcarbamoyl-AMP (TC-AMP) to the N6 group of A37, together with TsaE and TsaB. TsaD likely plays a direct catalytic role in this reaction.</text>
</comment>
<comment type="catalytic activity">
    <reaction evidence="1">
        <text>L-threonylcarbamoyladenylate + adenosine(37) in tRNA = N(6)-L-threonylcarbamoyladenosine(37) in tRNA + AMP + H(+)</text>
        <dbReference type="Rhea" id="RHEA:37059"/>
        <dbReference type="Rhea" id="RHEA-COMP:10162"/>
        <dbReference type="Rhea" id="RHEA-COMP:10163"/>
        <dbReference type="ChEBI" id="CHEBI:15378"/>
        <dbReference type="ChEBI" id="CHEBI:73682"/>
        <dbReference type="ChEBI" id="CHEBI:74411"/>
        <dbReference type="ChEBI" id="CHEBI:74418"/>
        <dbReference type="ChEBI" id="CHEBI:456215"/>
        <dbReference type="EC" id="2.3.1.234"/>
    </reaction>
</comment>
<comment type="cofactor">
    <cofactor evidence="1">
        <name>Fe(2+)</name>
        <dbReference type="ChEBI" id="CHEBI:29033"/>
    </cofactor>
    <text evidence="1">Binds 1 Fe(2+) ion per subunit.</text>
</comment>
<comment type="subcellular location">
    <subcellularLocation>
        <location evidence="1">Cytoplasm</location>
    </subcellularLocation>
</comment>
<comment type="similarity">
    <text evidence="1">Belongs to the KAE1 / TsaD family.</text>
</comment>
<accession>Q4L7T2</accession>
<feature type="chain" id="PRO_0000303555" description="tRNA N6-adenosine threonylcarbamoyltransferase">
    <location>
        <begin position="1"/>
        <end position="342"/>
    </location>
</feature>
<feature type="binding site" evidence="1">
    <location>
        <position position="115"/>
    </location>
    <ligand>
        <name>Fe cation</name>
        <dbReference type="ChEBI" id="CHEBI:24875"/>
    </ligand>
</feature>
<feature type="binding site" evidence="1">
    <location>
        <position position="119"/>
    </location>
    <ligand>
        <name>Fe cation</name>
        <dbReference type="ChEBI" id="CHEBI:24875"/>
    </ligand>
</feature>
<feature type="binding site" evidence="1">
    <location>
        <begin position="137"/>
        <end position="141"/>
    </location>
    <ligand>
        <name>substrate</name>
    </ligand>
</feature>
<feature type="binding site" evidence="1">
    <location>
        <position position="170"/>
    </location>
    <ligand>
        <name>substrate</name>
    </ligand>
</feature>
<feature type="binding site" evidence="1">
    <location>
        <position position="183"/>
    </location>
    <ligand>
        <name>substrate</name>
    </ligand>
</feature>
<feature type="binding site" evidence="1">
    <location>
        <position position="187"/>
    </location>
    <ligand>
        <name>substrate</name>
    </ligand>
</feature>
<feature type="binding site" evidence="1">
    <location>
        <position position="276"/>
    </location>
    <ligand>
        <name>substrate</name>
    </ligand>
</feature>
<feature type="binding site" evidence="1">
    <location>
        <position position="304"/>
    </location>
    <ligand>
        <name>Fe cation</name>
        <dbReference type="ChEBI" id="CHEBI:24875"/>
    </ligand>
</feature>
<keyword id="KW-0012">Acyltransferase</keyword>
<keyword id="KW-0963">Cytoplasm</keyword>
<keyword id="KW-0408">Iron</keyword>
<keyword id="KW-0479">Metal-binding</keyword>
<keyword id="KW-0808">Transferase</keyword>
<keyword id="KW-0819">tRNA processing</keyword>
<gene>
    <name evidence="1" type="primary">tsaD</name>
    <name type="synonym">gcp</name>
    <name type="ordered locus">SH0984</name>
</gene>
<proteinExistence type="inferred from homology"/>
<organism>
    <name type="scientific">Staphylococcus haemolyticus (strain JCSC1435)</name>
    <dbReference type="NCBI Taxonomy" id="279808"/>
    <lineage>
        <taxon>Bacteria</taxon>
        <taxon>Bacillati</taxon>
        <taxon>Bacillota</taxon>
        <taxon>Bacilli</taxon>
        <taxon>Bacillales</taxon>
        <taxon>Staphylococcaceae</taxon>
        <taxon>Staphylococcus</taxon>
    </lineage>
</organism>
<name>TSAD_STAHJ</name>
<dbReference type="EC" id="2.3.1.234" evidence="1"/>
<dbReference type="EMBL" id="AP006716">
    <property type="protein sequence ID" value="BAE04293.1"/>
    <property type="molecule type" value="Genomic_DNA"/>
</dbReference>
<dbReference type="RefSeq" id="WP_011275292.1">
    <property type="nucleotide sequence ID" value="NC_007168.1"/>
</dbReference>
<dbReference type="SMR" id="Q4L7T2"/>
<dbReference type="KEGG" id="sha:SH0984"/>
<dbReference type="eggNOG" id="COG0533">
    <property type="taxonomic scope" value="Bacteria"/>
</dbReference>
<dbReference type="HOGENOM" id="CLU_023208_0_2_9"/>
<dbReference type="OrthoDB" id="9806197at2"/>
<dbReference type="Proteomes" id="UP000000543">
    <property type="component" value="Chromosome"/>
</dbReference>
<dbReference type="GO" id="GO:0005737">
    <property type="term" value="C:cytoplasm"/>
    <property type="evidence" value="ECO:0007669"/>
    <property type="project" value="UniProtKB-SubCell"/>
</dbReference>
<dbReference type="GO" id="GO:0005506">
    <property type="term" value="F:iron ion binding"/>
    <property type="evidence" value="ECO:0007669"/>
    <property type="project" value="UniProtKB-UniRule"/>
</dbReference>
<dbReference type="GO" id="GO:0061711">
    <property type="term" value="F:N(6)-L-threonylcarbamoyladenine synthase activity"/>
    <property type="evidence" value="ECO:0007669"/>
    <property type="project" value="UniProtKB-EC"/>
</dbReference>
<dbReference type="GO" id="GO:0002949">
    <property type="term" value="P:tRNA threonylcarbamoyladenosine modification"/>
    <property type="evidence" value="ECO:0007669"/>
    <property type="project" value="UniProtKB-UniRule"/>
</dbReference>
<dbReference type="CDD" id="cd24133">
    <property type="entry name" value="ASKHA_NBD_TsaD_bac"/>
    <property type="match status" value="1"/>
</dbReference>
<dbReference type="FunFam" id="3.30.420.40:FF:000012">
    <property type="entry name" value="tRNA N6-adenosine threonylcarbamoyltransferase"/>
    <property type="match status" value="1"/>
</dbReference>
<dbReference type="FunFam" id="3.30.420.40:FF:000040">
    <property type="entry name" value="tRNA N6-adenosine threonylcarbamoyltransferase"/>
    <property type="match status" value="1"/>
</dbReference>
<dbReference type="Gene3D" id="3.30.420.40">
    <property type="match status" value="2"/>
</dbReference>
<dbReference type="HAMAP" id="MF_01445">
    <property type="entry name" value="TsaD"/>
    <property type="match status" value="1"/>
</dbReference>
<dbReference type="InterPro" id="IPR043129">
    <property type="entry name" value="ATPase_NBD"/>
</dbReference>
<dbReference type="InterPro" id="IPR000905">
    <property type="entry name" value="Gcp-like_dom"/>
</dbReference>
<dbReference type="InterPro" id="IPR017861">
    <property type="entry name" value="KAE1/TsaD"/>
</dbReference>
<dbReference type="InterPro" id="IPR017860">
    <property type="entry name" value="Peptidase_M22_CS"/>
</dbReference>
<dbReference type="InterPro" id="IPR022450">
    <property type="entry name" value="TsaD"/>
</dbReference>
<dbReference type="NCBIfam" id="TIGR00329">
    <property type="entry name" value="gcp_kae1"/>
    <property type="match status" value="1"/>
</dbReference>
<dbReference type="NCBIfam" id="TIGR03723">
    <property type="entry name" value="T6A_TsaD_YgjD"/>
    <property type="match status" value="1"/>
</dbReference>
<dbReference type="PANTHER" id="PTHR11735">
    <property type="entry name" value="TRNA N6-ADENOSINE THREONYLCARBAMOYLTRANSFERASE"/>
    <property type="match status" value="1"/>
</dbReference>
<dbReference type="PANTHER" id="PTHR11735:SF6">
    <property type="entry name" value="TRNA N6-ADENOSINE THREONYLCARBAMOYLTRANSFERASE, MITOCHONDRIAL"/>
    <property type="match status" value="1"/>
</dbReference>
<dbReference type="Pfam" id="PF00814">
    <property type="entry name" value="TsaD"/>
    <property type="match status" value="1"/>
</dbReference>
<dbReference type="PRINTS" id="PR00789">
    <property type="entry name" value="OSIALOPTASE"/>
</dbReference>
<dbReference type="SUPFAM" id="SSF53067">
    <property type="entry name" value="Actin-like ATPase domain"/>
    <property type="match status" value="2"/>
</dbReference>
<dbReference type="PROSITE" id="PS01016">
    <property type="entry name" value="GLYCOPROTEASE"/>
    <property type="match status" value="1"/>
</dbReference>
<protein>
    <recommendedName>
        <fullName evidence="1">tRNA N6-adenosine threonylcarbamoyltransferase</fullName>
        <ecNumber evidence="1">2.3.1.234</ecNumber>
    </recommendedName>
    <alternativeName>
        <fullName evidence="1">N6-L-threonylcarbamoyladenine synthase</fullName>
        <shortName evidence="1">t(6)A synthase</shortName>
    </alternativeName>
    <alternativeName>
        <fullName evidence="1">t(6)A37 threonylcarbamoyladenosine biosynthesis protein TsaD</fullName>
    </alternativeName>
    <alternativeName>
        <fullName evidence="1">tRNA threonylcarbamoyladenosine biosynthesis protein TsaD</fullName>
    </alternativeName>
</protein>